<evidence type="ECO:0000250" key="1"/>
<evidence type="ECO:0000305" key="2"/>
<comment type="function">
    <text>Cytochromes P450 are a group of heme-thiolate monooxygenases. They oxidize a variety of structurally unrelated compounds, including steroids, fatty acids, and xenobiotics.</text>
</comment>
<comment type="cofactor">
    <cofactor evidence="1">
        <name>heme</name>
        <dbReference type="ChEBI" id="CHEBI:30413"/>
    </cofactor>
</comment>
<comment type="similarity">
    <text evidence="2">Belongs to the cytochrome P450 family.</text>
</comment>
<keyword id="KW-0349">Heme</keyword>
<keyword id="KW-0408">Iron</keyword>
<keyword id="KW-0479">Metal-binding</keyword>
<keyword id="KW-0503">Monooxygenase</keyword>
<keyword id="KW-0560">Oxidoreductase</keyword>
<keyword id="KW-1185">Reference proteome</keyword>
<sequence>MSEQQPLPTLPMWRVDHIEPSPEMLALRANGPIHRVRFPSGHEGWWVTGYDEAKAVLSDAAFRPAGMPPAAFTPDSVILGSPGWLVSHEGREHARLRAIVAPAFSDRRVKLLVQQVEAIAAHLFETLAAQPQPADLRRHLSFPLPAMVISALMGVLYEDHAFFAGLSDEVMTHQHESGPRSASRLAWEELRAYIRGKMRDKRQDPDDNLLTDLLAAVDQGKASEEEAVGLAAGMLVAGHESTVAQIEFGLLAMFRHPQQRERLVGDPSLVDKAVEEILRMYPPGAGWDGIMRYPRTDVTIAGEHIPAESKVLVGLPATSFDPHHFDDPEIFDIERQEKPHLAFSYGPHACIGVALARLELKVVFGSIFQRLPALRLAVAPEQLKLRKEIITGGFEQFPVLW</sequence>
<feature type="chain" id="PRO_0000052226" description="Cytochrome P450 BJ-1">
    <location>
        <begin position="1"/>
        <end position="401"/>
    </location>
</feature>
<feature type="binding site" description="axial binding residue" evidence="1">
    <location>
        <position position="350"/>
    </location>
    <ligand>
        <name>heme</name>
        <dbReference type="ChEBI" id="CHEBI:30413"/>
    </ligand>
    <ligandPart>
        <name>Fe</name>
        <dbReference type="ChEBI" id="CHEBI:18248"/>
    </ligandPart>
</feature>
<feature type="sequence conflict" description="In Ref. 1 and 2." evidence="2" ref="1 2">
    <original>L</original>
    <variation>H</variation>
    <location>
        <position position="251"/>
    </location>
</feature>
<feature type="sequence conflict" description="In Ref. 1 and 2." evidence="2" ref="1 2">
    <original>E</original>
    <variation>Q</variation>
    <location>
        <position position="275"/>
    </location>
</feature>
<protein>
    <recommendedName>
        <fullName>Cytochrome P450 BJ-1</fullName>
        <ecNumber>1.14.14.-</ecNumber>
    </recommendedName>
    <alternativeName>
        <fullName>Cytochrome P450 112</fullName>
    </alternativeName>
</protein>
<dbReference type="EC" id="1.14.14.-"/>
<dbReference type="EMBL" id="U12678">
    <property type="protein sequence ID" value="AAC28889.1"/>
    <property type="molecule type" value="Genomic_DNA"/>
</dbReference>
<dbReference type="EMBL" id="BA000040">
    <property type="protein sequence ID" value="BAC47409.1"/>
    <property type="molecule type" value="Genomic_DNA"/>
</dbReference>
<dbReference type="PIR" id="I40208">
    <property type="entry name" value="I40208"/>
</dbReference>
<dbReference type="RefSeq" id="NP_768784.1">
    <property type="nucleotide sequence ID" value="NC_004463.1"/>
</dbReference>
<dbReference type="RefSeq" id="WP_011084938.1">
    <property type="nucleotide sequence ID" value="NZ_CP011360.1"/>
</dbReference>
<dbReference type="SMR" id="Q59203"/>
<dbReference type="STRING" id="224911.AAV28_07560"/>
<dbReference type="EnsemblBacteria" id="BAC47409">
    <property type="protein sequence ID" value="BAC47409"/>
    <property type="gene ID" value="BAC47409"/>
</dbReference>
<dbReference type="KEGG" id="bja:blr2144"/>
<dbReference type="PATRIC" id="fig|224911.44.peg.1659"/>
<dbReference type="eggNOG" id="COG2124">
    <property type="taxonomic scope" value="Bacteria"/>
</dbReference>
<dbReference type="HOGENOM" id="CLU_033716_1_1_5"/>
<dbReference type="InParanoid" id="Q59203"/>
<dbReference type="OrthoDB" id="9801155at2"/>
<dbReference type="PhylomeDB" id="Q59203"/>
<dbReference type="Proteomes" id="UP000002526">
    <property type="component" value="Chromosome"/>
</dbReference>
<dbReference type="GO" id="GO:0020037">
    <property type="term" value="F:heme binding"/>
    <property type="evidence" value="ECO:0000318"/>
    <property type="project" value="GO_Central"/>
</dbReference>
<dbReference type="GO" id="GO:0005506">
    <property type="term" value="F:iron ion binding"/>
    <property type="evidence" value="ECO:0007669"/>
    <property type="project" value="InterPro"/>
</dbReference>
<dbReference type="GO" id="GO:0004497">
    <property type="term" value="F:monooxygenase activity"/>
    <property type="evidence" value="ECO:0000318"/>
    <property type="project" value="GO_Central"/>
</dbReference>
<dbReference type="GO" id="GO:0016705">
    <property type="term" value="F:oxidoreductase activity, acting on paired donors, with incorporation or reduction of molecular oxygen"/>
    <property type="evidence" value="ECO:0007669"/>
    <property type="project" value="InterPro"/>
</dbReference>
<dbReference type="CDD" id="cd11031">
    <property type="entry name" value="Cyp158A-like"/>
    <property type="match status" value="1"/>
</dbReference>
<dbReference type="FunFam" id="1.10.630.10:FF:000018">
    <property type="entry name" value="Cytochrome P450 monooxygenase"/>
    <property type="match status" value="1"/>
</dbReference>
<dbReference type="Gene3D" id="1.10.630.10">
    <property type="entry name" value="Cytochrome P450"/>
    <property type="match status" value="1"/>
</dbReference>
<dbReference type="InterPro" id="IPR001128">
    <property type="entry name" value="Cyt_P450"/>
</dbReference>
<dbReference type="InterPro" id="IPR002397">
    <property type="entry name" value="Cyt_P450_B"/>
</dbReference>
<dbReference type="InterPro" id="IPR017972">
    <property type="entry name" value="Cyt_P450_CS"/>
</dbReference>
<dbReference type="InterPro" id="IPR036396">
    <property type="entry name" value="Cyt_P450_sf"/>
</dbReference>
<dbReference type="PANTHER" id="PTHR46696:SF5">
    <property type="entry name" value="CYTOCHROME P450 BJ-1"/>
    <property type="match status" value="1"/>
</dbReference>
<dbReference type="PANTHER" id="PTHR46696">
    <property type="entry name" value="P450, PUTATIVE (EUROFUNG)-RELATED"/>
    <property type="match status" value="1"/>
</dbReference>
<dbReference type="Pfam" id="PF00067">
    <property type="entry name" value="p450"/>
    <property type="match status" value="1"/>
</dbReference>
<dbReference type="PRINTS" id="PR00359">
    <property type="entry name" value="BP450"/>
</dbReference>
<dbReference type="PRINTS" id="PR00385">
    <property type="entry name" value="P450"/>
</dbReference>
<dbReference type="SUPFAM" id="SSF48264">
    <property type="entry name" value="Cytochrome P450"/>
    <property type="match status" value="1"/>
</dbReference>
<dbReference type="PROSITE" id="PS00086">
    <property type="entry name" value="CYTOCHROME_P450"/>
    <property type="match status" value="1"/>
</dbReference>
<organism>
    <name type="scientific">Bradyrhizobium diazoefficiens (strain JCM 10833 / BCRC 13528 / IAM 13628 / NBRC 14792 / USDA 110)</name>
    <dbReference type="NCBI Taxonomy" id="224911"/>
    <lineage>
        <taxon>Bacteria</taxon>
        <taxon>Pseudomonadati</taxon>
        <taxon>Pseudomonadota</taxon>
        <taxon>Alphaproteobacteria</taxon>
        <taxon>Hyphomicrobiales</taxon>
        <taxon>Nitrobacteraceae</taxon>
        <taxon>Bradyrhizobium</taxon>
    </lineage>
</organism>
<proteinExistence type="inferred from homology"/>
<name>CPXP_BRADU</name>
<gene>
    <name type="primary">cyp112</name>
    <name type="ordered locus">blr2144</name>
</gene>
<accession>Q59203</accession>
<reference key="1">
    <citation type="journal article" date="1993" name="Appl. Environ. Microbiol.">
        <title>Cloning and mutagenesis of a cytochrome P-450 locus from Bradyrhizobium japonicum that is expressed anaerobically and symbiotically.</title>
        <authorList>
            <person name="Tully R.E."/>
            <person name="Keister D.L."/>
        </authorList>
    </citation>
    <scope>NUCLEOTIDE SEQUENCE [GENOMIC DNA]</scope>
    <source>
        <strain>JCM 10833 / BCRC 13528 / IAM 13628 / NBRC 14792 / USDA 110</strain>
    </source>
</reference>
<reference key="2">
    <citation type="journal article" date="1998" name="Biochim. Biophys. Acta">
        <title>Identification and sequencing of a cytochrome P450 gene cluster from Bradyrhizobium japonicum.</title>
        <authorList>
            <person name="Tully R.E."/>
            <person name="van Berkum P."/>
            <person name="Lovins K.W."/>
            <person name="Keister D.L."/>
        </authorList>
    </citation>
    <scope>NUCLEOTIDE SEQUENCE [GENOMIC DNA]</scope>
    <source>
        <strain>JCM 10833 / BCRC 13528 / IAM 13628 / NBRC 14792 / USDA 110</strain>
    </source>
</reference>
<reference key="3">
    <citation type="journal article" date="2002" name="DNA Res.">
        <title>Complete genomic sequence of nitrogen-fixing symbiotic bacterium Bradyrhizobium japonicum USDA110.</title>
        <authorList>
            <person name="Kaneko T."/>
            <person name="Nakamura Y."/>
            <person name="Sato S."/>
            <person name="Minamisawa K."/>
            <person name="Uchiumi T."/>
            <person name="Sasamoto S."/>
            <person name="Watanabe A."/>
            <person name="Idesawa K."/>
            <person name="Iriguchi M."/>
            <person name="Kawashima K."/>
            <person name="Kohara M."/>
            <person name="Matsumoto M."/>
            <person name="Shimpo S."/>
            <person name="Tsuruoka H."/>
            <person name="Wada T."/>
            <person name="Yamada M."/>
            <person name="Tabata S."/>
        </authorList>
    </citation>
    <scope>NUCLEOTIDE SEQUENCE [LARGE SCALE GENOMIC DNA]</scope>
    <source>
        <strain>JCM 10833 / BCRC 13528 / IAM 13628 / NBRC 14792 / USDA 110</strain>
    </source>
</reference>